<name>GLPK_GEOKA</name>
<comment type="function">
    <text evidence="1">Key enzyme in the regulation of glycerol uptake and metabolism. Catalyzes the phosphorylation of glycerol to yield sn-glycerol 3-phosphate.</text>
</comment>
<comment type="catalytic activity">
    <reaction evidence="1">
        <text>glycerol + ATP = sn-glycerol 3-phosphate + ADP + H(+)</text>
        <dbReference type="Rhea" id="RHEA:21644"/>
        <dbReference type="ChEBI" id="CHEBI:15378"/>
        <dbReference type="ChEBI" id="CHEBI:17754"/>
        <dbReference type="ChEBI" id="CHEBI:30616"/>
        <dbReference type="ChEBI" id="CHEBI:57597"/>
        <dbReference type="ChEBI" id="CHEBI:456216"/>
        <dbReference type="EC" id="2.7.1.30"/>
    </reaction>
</comment>
<comment type="activity regulation">
    <text evidence="1">Activated by phosphorylation and inhibited by fructose 1,6-bisphosphate (FBP).</text>
</comment>
<comment type="pathway">
    <text evidence="1">Polyol metabolism; glycerol degradation via glycerol kinase pathway; sn-glycerol 3-phosphate from glycerol: step 1/1.</text>
</comment>
<comment type="subunit">
    <text evidence="1">Homotetramer and homodimer (in equilibrium).</text>
</comment>
<comment type="PTM">
    <text evidence="1">The phosphoenolpyruvate-dependent sugar phosphotransferase system (PTS), including enzyme I, and histidine-containing protein (HPr) are required for the phosphorylation, which leads to the activation of the enzyme.</text>
</comment>
<comment type="similarity">
    <text evidence="1">Belongs to the FGGY kinase family.</text>
</comment>
<organism>
    <name type="scientific">Geobacillus kaustophilus (strain HTA426)</name>
    <dbReference type="NCBI Taxonomy" id="235909"/>
    <lineage>
        <taxon>Bacteria</taxon>
        <taxon>Bacillati</taxon>
        <taxon>Bacillota</taxon>
        <taxon>Bacilli</taxon>
        <taxon>Bacillales</taxon>
        <taxon>Anoxybacillaceae</taxon>
        <taxon>Geobacillus</taxon>
        <taxon>Geobacillus thermoleovorans group</taxon>
    </lineage>
</organism>
<gene>
    <name evidence="1" type="primary">glpK</name>
    <name type="ordered locus">GK1360</name>
</gene>
<sequence length="496" mass="54747">MNQYILAIDQGTTSSRAILFNQKGEIVHMAQKEFTQYFPQPGWVEHNANEIWGSVLAVIASVLSEAQVKPEQVAAIGITNQRETTVVWEKDTGNPIYNAIVWQSRQTAGICDELKAKGYDPLFREKTGLLIDAYFSGTKVKWILDHVEGARERAERGELLFGTIDTWLIWKLSGGRAHVTDYSNASRTLMFNIHTLEWDDELLDILGVPKAMLPEVRPSSEVYAKTAPYHFFGVEVPIAGAAGDQQAALFGQACFTEGMAKNTYGTGCFMLMNTGEKAVASKHGLLTTIAWGIDGKVEYALEGSIFVAGSAIQWLRDGLRMIKTAADSEAYAEKVESTDGVYVVPAFVGLGTPYWDSEVRGAVFGLTRGTTKEHFIRATLESLAYQTKDVLAAMEADSGISLTTLRVDGGAVKNNFLMQFQSDLLAVPVERPVVNETTALGAAYLAGLAVGYWNSRDDIAAQWQLERRFEPKMDDDKRTMLYDGWKKAVRAAMAFK</sequence>
<evidence type="ECO:0000255" key="1">
    <source>
        <dbReference type="HAMAP-Rule" id="MF_00186"/>
    </source>
</evidence>
<protein>
    <recommendedName>
        <fullName evidence="1">Glycerol kinase</fullName>
        <ecNumber evidence="1">2.7.1.30</ecNumber>
    </recommendedName>
    <alternativeName>
        <fullName evidence="1">ATP:glycerol 3-phosphotransferase</fullName>
    </alternativeName>
    <alternativeName>
        <fullName evidence="1">Glycerokinase</fullName>
        <shortName evidence="1">GK</shortName>
    </alternativeName>
</protein>
<proteinExistence type="inferred from homology"/>
<reference key="1">
    <citation type="journal article" date="2004" name="Nucleic Acids Res.">
        <title>Thermoadaptation trait revealed by the genome sequence of thermophilic Geobacillus kaustophilus.</title>
        <authorList>
            <person name="Takami H."/>
            <person name="Takaki Y."/>
            <person name="Chee G.-J."/>
            <person name="Nishi S."/>
            <person name="Shimamura S."/>
            <person name="Suzuki H."/>
            <person name="Matsui S."/>
            <person name="Uchiyama I."/>
        </authorList>
    </citation>
    <scope>NUCLEOTIDE SEQUENCE [LARGE SCALE GENOMIC DNA]</scope>
    <source>
        <strain>HTA426</strain>
    </source>
</reference>
<dbReference type="EC" id="2.7.1.30" evidence="1"/>
<dbReference type="EMBL" id="BA000043">
    <property type="protein sequence ID" value="BAD75645.1"/>
    <property type="molecule type" value="Genomic_DNA"/>
</dbReference>
<dbReference type="RefSeq" id="WP_011230857.1">
    <property type="nucleotide sequence ID" value="NC_006510.1"/>
</dbReference>
<dbReference type="SMR" id="Q5L091"/>
<dbReference type="STRING" id="235909.GK1360"/>
<dbReference type="KEGG" id="gka:GK1360"/>
<dbReference type="PATRIC" id="fig|235909.7.peg.1468"/>
<dbReference type="eggNOG" id="COG0554">
    <property type="taxonomic scope" value="Bacteria"/>
</dbReference>
<dbReference type="HOGENOM" id="CLU_009281_2_3_9"/>
<dbReference type="UniPathway" id="UPA00618">
    <property type="reaction ID" value="UER00672"/>
</dbReference>
<dbReference type="Proteomes" id="UP000001172">
    <property type="component" value="Chromosome"/>
</dbReference>
<dbReference type="GO" id="GO:0005829">
    <property type="term" value="C:cytosol"/>
    <property type="evidence" value="ECO:0007669"/>
    <property type="project" value="TreeGrafter"/>
</dbReference>
<dbReference type="GO" id="GO:0005524">
    <property type="term" value="F:ATP binding"/>
    <property type="evidence" value="ECO:0007669"/>
    <property type="project" value="UniProtKB-UniRule"/>
</dbReference>
<dbReference type="GO" id="GO:0004370">
    <property type="term" value="F:glycerol kinase activity"/>
    <property type="evidence" value="ECO:0000250"/>
    <property type="project" value="UniProtKB"/>
</dbReference>
<dbReference type="GO" id="GO:0019563">
    <property type="term" value="P:glycerol catabolic process"/>
    <property type="evidence" value="ECO:0007669"/>
    <property type="project" value="UniProtKB-UniRule"/>
</dbReference>
<dbReference type="GO" id="GO:0006071">
    <property type="term" value="P:glycerol metabolic process"/>
    <property type="evidence" value="ECO:0000250"/>
    <property type="project" value="UniProtKB"/>
</dbReference>
<dbReference type="GO" id="GO:0006072">
    <property type="term" value="P:glycerol-3-phosphate metabolic process"/>
    <property type="evidence" value="ECO:0007669"/>
    <property type="project" value="InterPro"/>
</dbReference>
<dbReference type="CDD" id="cd07786">
    <property type="entry name" value="FGGY_EcGK_like"/>
    <property type="match status" value="1"/>
</dbReference>
<dbReference type="FunFam" id="3.30.420.40:FF:000007">
    <property type="entry name" value="Glycerol kinase"/>
    <property type="match status" value="1"/>
</dbReference>
<dbReference type="FunFam" id="3.30.420.40:FF:000008">
    <property type="entry name" value="Glycerol kinase"/>
    <property type="match status" value="1"/>
</dbReference>
<dbReference type="Gene3D" id="3.30.420.40">
    <property type="match status" value="2"/>
</dbReference>
<dbReference type="HAMAP" id="MF_00186">
    <property type="entry name" value="Glycerol_kin"/>
    <property type="match status" value="1"/>
</dbReference>
<dbReference type="InterPro" id="IPR043129">
    <property type="entry name" value="ATPase_NBD"/>
</dbReference>
<dbReference type="InterPro" id="IPR000577">
    <property type="entry name" value="Carb_kinase_FGGY"/>
</dbReference>
<dbReference type="InterPro" id="IPR018483">
    <property type="entry name" value="Carb_kinase_FGGY_CS"/>
</dbReference>
<dbReference type="InterPro" id="IPR018485">
    <property type="entry name" value="FGGY_C"/>
</dbReference>
<dbReference type="InterPro" id="IPR018484">
    <property type="entry name" value="FGGY_N"/>
</dbReference>
<dbReference type="InterPro" id="IPR005999">
    <property type="entry name" value="Glycerol_kin"/>
</dbReference>
<dbReference type="NCBIfam" id="TIGR01311">
    <property type="entry name" value="glycerol_kin"/>
    <property type="match status" value="1"/>
</dbReference>
<dbReference type="NCBIfam" id="NF000756">
    <property type="entry name" value="PRK00047.1"/>
    <property type="match status" value="1"/>
</dbReference>
<dbReference type="PANTHER" id="PTHR10196:SF69">
    <property type="entry name" value="GLYCEROL KINASE"/>
    <property type="match status" value="1"/>
</dbReference>
<dbReference type="PANTHER" id="PTHR10196">
    <property type="entry name" value="SUGAR KINASE"/>
    <property type="match status" value="1"/>
</dbReference>
<dbReference type="Pfam" id="PF02782">
    <property type="entry name" value="FGGY_C"/>
    <property type="match status" value="1"/>
</dbReference>
<dbReference type="Pfam" id="PF00370">
    <property type="entry name" value="FGGY_N"/>
    <property type="match status" value="1"/>
</dbReference>
<dbReference type="PIRSF" id="PIRSF000538">
    <property type="entry name" value="GlpK"/>
    <property type="match status" value="1"/>
</dbReference>
<dbReference type="SUPFAM" id="SSF53067">
    <property type="entry name" value="Actin-like ATPase domain"/>
    <property type="match status" value="2"/>
</dbReference>
<dbReference type="PROSITE" id="PS00933">
    <property type="entry name" value="FGGY_KINASES_1"/>
    <property type="match status" value="1"/>
</dbReference>
<dbReference type="PROSITE" id="PS00445">
    <property type="entry name" value="FGGY_KINASES_2"/>
    <property type="match status" value="1"/>
</dbReference>
<keyword id="KW-0067">ATP-binding</keyword>
<keyword id="KW-0319">Glycerol metabolism</keyword>
<keyword id="KW-0418">Kinase</keyword>
<keyword id="KW-0547">Nucleotide-binding</keyword>
<keyword id="KW-0597">Phosphoprotein</keyword>
<keyword id="KW-1185">Reference proteome</keyword>
<keyword id="KW-0808">Transferase</keyword>
<feature type="chain" id="PRO_1000020731" description="Glycerol kinase">
    <location>
        <begin position="1"/>
        <end position="496"/>
    </location>
</feature>
<feature type="binding site" evidence="1">
    <location>
        <position position="12"/>
    </location>
    <ligand>
        <name>ADP</name>
        <dbReference type="ChEBI" id="CHEBI:456216"/>
    </ligand>
</feature>
<feature type="binding site" evidence="1">
    <location>
        <position position="12"/>
    </location>
    <ligand>
        <name>ATP</name>
        <dbReference type="ChEBI" id="CHEBI:30616"/>
    </ligand>
</feature>
<feature type="binding site" evidence="1">
    <location>
        <position position="12"/>
    </location>
    <ligand>
        <name>sn-glycerol 3-phosphate</name>
        <dbReference type="ChEBI" id="CHEBI:57597"/>
    </ligand>
</feature>
<feature type="binding site" evidence="1">
    <location>
        <position position="13"/>
    </location>
    <ligand>
        <name>ATP</name>
        <dbReference type="ChEBI" id="CHEBI:30616"/>
    </ligand>
</feature>
<feature type="binding site" evidence="1">
    <location>
        <position position="14"/>
    </location>
    <ligand>
        <name>ATP</name>
        <dbReference type="ChEBI" id="CHEBI:30616"/>
    </ligand>
</feature>
<feature type="binding site" evidence="1">
    <location>
        <position position="16"/>
    </location>
    <ligand>
        <name>ADP</name>
        <dbReference type="ChEBI" id="CHEBI:456216"/>
    </ligand>
</feature>
<feature type="binding site" evidence="1">
    <location>
        <position position="82"/>
    </location>
    <ligand>
        <name>glycerol</name>
        <dbReference type="ChEBI" id="CHEBI:17754"/>
    </ligand>
</feature>
<feature type="binding site" evidence="1">
    <location>
        <position position="82"/>
    </location>
    <ligand>
        <name>sn-glycerol 3-phosphate</name>
        <dbReference type="ChEBI" id="CHEBI:57597"/>
    </ligand>
</feature>
<feature type="binding site" evidence="1">
    <location>
        <position position="83"/>
    </location>
    <ligand>
        <name>glycerol</name>
        <dbReference type="ChEBI" id="CHEBI:17754"/>
    </ligand>
</feature>
<feature type="binding site" evidence="1">
    <location>
        <position position="83"/>
    </location>
    <ligand>
        <name>sn-glycerol 3-phosphate</name>
        <dbReference type="ChEBI" id="CHEBI:57597"/>
    </ligand>
</feature>
<feature type="binding site" evidence="1">
    <location>
        <position position="134"/>
    </location>
    <ligand>
        <name>glycerol</name>
        <dbReference type="ChEBI" id="CHEBI:17754"/>
    </ligand>
</feature>
<feature type="binding site" evidence="1">
    <location>
        <position position="134"/>
    </location>
    <ligand>
        <name>sn-glycerol 3-phosphate</name>
        <dbReference type="ChEBI" id="CHEBI:57597"/>
    </ligand>
</feature>
<feature type="binding site" evidence="1">
    <location>
        <position position="244"/>
    </location>
    <ligand>
        <name>glycerol</name>
        <dbReference type="ChEBI" id="CHEBI:17754"/>
    </ligand>
</feature>
<feature type="binding site" evidence="1">
    <location>
        <position position="244"/>
    </location>
    <ligand>
        <name>sn-glycerol 3-phosphate</name>
        <dbReference type="ChEBI" id="CHEBI:57597"/>
    </ligand>
</feature>
<feature type="binding site" evidence="1">
    <location>
        <position position="245"/>
    </location>
    <ligand>
        <name>glycerol</name>
        <dbReference type="ChEBI" id="CHEBI:17754"/>
    </ligand>
</feature>
<feature type="binding site" evidence="1">
    <location>
        <position position="266"/>
    </location>
    <ligand>
        <name>ADP</name>
        <dbReference type="ChEBI" id="CHEBI:456216"/>
    </ligand>
</feature>
<feature type="binding site" evidence="1">
    <location>
        <position position="266"/>
    </location>
    <ligand>
        <name>ATP</name>
        <dbReference type="ChEBI" id="CHEBI:30616"/>
    </ligand>
</feature>
<feature type="binding site" evidence="1">
    <location>
        <position position="309"/>
    </location>
    <ligand>
        <name>ADP</name>
        <dbReference type="ChEBI" id="CHEBI:456216"/>
    </ligand>
</feature>
<feature type="binding site" evidence="1">
    <location>
        <position position="309"/>
    </location>
    <ligand>
        <name>ATP</name>
        <dbReference type="ChEBI" id="CHEBI:30616"/>
    </ligand>
</feature>
<feature type="binding site" evidence="1">
    <location>
        <position position="313"/>
    </location>
    <ligand>
        <name>ATP</name>
        <dbReference type="ChEBI" id="CHEBI:30616"/>
    </ligand>
</feature>
<feature type="binding site" evidence="1">
    <location>
        <position position="410"/>
    </location>
    <ligand>
        <name>ADP</name>
        <dbReference type="ChEBI" id="CHEBI:456216"/>
    </ligand>
</feature>
<feature type="binding site" evidence="1">
    <location>
        <position position="410"/>
    </location>
    <ligand>
        <name>ATP</name>
        <dbReference type="ChEBI" id="CHEBI:30616"/>
    </ligand>
</feature>
<feature type="binding site" evidence="1">
    <location>
        <position position="414"/>
    </location>
    <ligand>
        <name>ADP</name>
        <dbReference type="ChEBI" id="CHEBI:456216"/>
    </ligand>
</feature>
<feature type="modified residue" description="Phosphohistidine; by HPr" evidence="1">
    <location>
        <position position="230"/>
    </location>
</feature>
<accession>Q5L091</accession>